<reference key="1">
    <citation type="journal article" date="1997" name="Nature">
        <title>The complete genome sequence of the Gram-positive bacterium Bacillus subtilis.</title>
        <authorList>
            <person name="Kunst F."/>
            <person name="Ogasawara N."/>
            <person name="Moszer I."/>
            <person name="Albertini A.M."/>
            <person name="Alloni G."/>
            <person name="Azevedo V."/>
            <person name="Bertero M.G."/>
            <person name="Bessieres P."/>
            <person name="Bolotin A."/>
            <person name="Borchert S."/>
            <person name="Borriss R."/>
            <person name="Boursier L."/>
            <person name="Brans A."/>
            <person name="Braun M."/>
            <person name="Brignell S.C."/>
            <person name="Bron S."/>
            <person name="Brouillet S."/>
            <person name="Bruschi C.V."/>
            <person name="Caldwell B."/>
            <person name="Capuano V."/>
            <person name="Carter N.M."/>
            <person name="Choi S.-K."/>
            <person name="Codani J.-J."/>
            <person name="Connerton I.F."/>
            <person name="Cummings N.J."/>
            <person name="Daniel R.A."/>
            <person name="Denizot F."/>
            <person name="Devine K.M."/>
            <person name="Duesterhoeft A."/>
            <person name="Ehrlich S.D."/>
            <person name="Emmerson P.T."/>
            <person name="Entian K.-D."/>
            <person name="Errington J."/>
            <person name="Fabret C."/>
            <person name="Ferrari E."/>
            <person name="Foulger D."/>
            <person name="Fritz C."/>
            <person name="Fujita M."/>
            <person name="Fujita Y."/>
            <person name="Fuma S."/>
            <person name="Galizzi A."/>
            <person name="Galleron N."/>
            <person name="Ghim S.-Y."/>
            <person name="Glaser P."/>
            <person name="Goffeau A."/>
            <person name="Golightly E.J."/>
            <person name="Grandi G."/>
            <person name="Guiseppi G."/>
            <person name="Guy B.J."/>
            <person name="Haga K."/>
            <person name="Haiech J."/>
            <person name="Harwood C.R."/>
            <person name="Henaut A."/>
            <person name="Hilbert H."/>
            <person name="Holsappel S."/>
            <person name="Hosono S."/>
            <person name="Hullo M.-F."/>
            <person name="Itaya M."/>
            <person name="Jones L.-M."/>
            <person name="Joris B."/>
            <person name="Karamata D."/>
            <person name="Kasahara Y."/>
            <person name="Klaerr-Blanchard M."/>
            <person name="Klein C."/>
            <person name="Kobayashi Y."/>
            <person name="Koetter P."/>
            <person name="Koningstein G."/>
            <person name="Krogh S."/>
            <person name="Kumano M."/>
            <person name="Kurita K."/>
            <person name="Lapidus A."/>
            <person name="Lardinois S."/>
            <person name="Lauber J."/>
            <person name="Lazarevic V."/>
            <person name="Lee S.-M."/>
            <person name="Levine A."/>
            <person name="Liu H."/>
            <person name="Masuda S."/>
            <person name="Mauel C."/>
            <person name="Medigue C."/>
            <person name="Medina N."/>
            <person name="Mellado R.P."/>
            <person name="Mizuno M."/>
            <person name="Moestl D."/>
            <person name="Nakai S."/>
            <person name="Noback M."/>
            <person name="Noone D."/>
            <person name="O'Reilly M."/>
            <person name="Ogawa K."/>
            <person name="Ogiwara A."/>
            <person name="Oudega B."/>
            <person name="Park S.-H."/>
            <person name="Parro V."/>
            <person name="Pohl T.M."/>
            <person name="Portetelle D."/>
            <person name="Porwollik S."/>
            <person name="Prescott A.M."/>
            <person name="Presecan E."/>
            <person name="Pujic P."/>
            <person name="Purnelle B."/>
            <person name="Rapoport G."/>
            <person name="Rey M."/>
            <person name="Reynolds S."/>
            <person name="Rieger M."/>
            <person name="Rivolta C."/>
            <person name="Rocha E."/>
            <person name="Roche B."/>
            <person name="Rose M."/>
            <person name="Sadaie Y."/>
            <person name="Sato T."/>
            <person name="Scanlan E."/>
            <person name="Schleich S."/>
            <person name="Schroeter R."/>
            <person name="Scoffone F."/>
            <person name="Sekiguchi J."/>
            <person name="Sekowska A."/>
            <person name="Seror S.J."/>
            <person name="Serror P."/>
            <person name="Shin B.-S."/>
            <person name="Soldo B."/>
            <person name="Sorokin A."/>
            <person name="Tacconi E."/>
            <person name="Takagi T."/>
            <person name="Takahashi H."/>
            <person name="Takemaru K."/>
            <person name="Takeuchi M."/>
            <person name="Tamakoshi A."/>
            <person name="Tanaka T."/>
            <person name="Terpstra P."/>
            <person name="Tognoni A."/>
            <person name="Tosato V."/>
            <person name="Uchiyama S."/>
            <person name="Vandenbol M."/>
            <person name="Vannier F."/>
            <person name="Vassarotti A."/>
            <person name="Viari A."/>
            <person name="Wambutt R."/>
            <person name="Wedler E."/>
            <person name="Wedler H."/>
            <person name="Weitzenegger T."/>
            <person name="Winters P."/>
            <person name="Wipat A."/>
            <person name="Yamamoto H."/>
            <person name="Yamane K."/>
            <person name="Yasumoto K."/>
            <person name="Yata K."/>
            <person name="Yoshida K."/>
            <person name="Yoshikawa H.-F."/>
            <person name="Zumstein E."/>
            <person name="Yoshikawa H."/>
            <person name="Danchin A."/>
        </authorList>
    </citation>
    <scope>NUCLEOTIDE SEQUENCE [LARGE SCALE GENOMIC DNA]</scope>
    <source>
        <strain>168</strain>
    </source>
</reference>
<accession>O32038</accession>
<sequence length="592" mass="65975">MFGRTYYCGDITEKAIGESVTLKGWVQKRRDLGGLIFIDLRDRTGIVQVVFNPDVSKEALAIAEGIRNEYVLDIQGKVVAREEGTVNPNLKTGAIEIHADGVNVLNAAKTPPFAISDQAEEVSEDVRLKHRYLDLRRPAMFQTMQLRHNVTKAVRSFLDENGFLDIETPILTGSTPEGARDYLVPSRVHEGEFYALPQSPQLFKQLLMVSGIERYYQIARCFRDEDLRADRQPEFTQIDIEMSFMSQEDIMSLAEEMMAKVMRETKGEELQLPLPRMTYDEAMNKYGSDKPDTRFDMLLTDVSDIVKDTEFKVFSSAVANGGVVKAINVKGGAGDYSRKDIDALGAFAANYGAKGLAWVKVEADGVKGPIAKFFDEEKQSKLIEALDAAEGDLLLFGADQFEVVAASLGALRLKLGKERGLIDEKLFNFLWVIDWPLLEHDPEEGRFYAAHHPFTMPVREDLELIETAPEDMKAQAYDLVLNGYELGGGSIRIFEKDIQEKMFALLGFSPEEAAEQFGFLLEAFEYGAPPHGGIALGLDRLVMLLAGRTNLRDTIAFPKTASASCLMTEAPGEVSDAQLDELHLSIKKKVKN</sequence>
<name>SYDND_BACSU</name>
<evidence type="ECO:0000255" key="1">
    <source>
        <dbReference type="HAMAP-Rule" id="MF_00044"/>
    </source>
</evidence>
<proteinExistence type="inferred from homology"/>
<organism>
    <name type="scientific">Bacillus subtilis (strain 168)</name>
    <dbReference type="NCBI Taxonomy" id="224308"/>
    <lineage>
        <taxon>Bacteria</taxon>
        <taxon>Bacillati</taxon>
        <taxon>Bacillota</taxon>
        <taxon>Bacilli</taxon>
        <taxon>Bacillales</taxon>
        <taxon>Bacillaceae</taxon>
        <taxon>Bacillus</taxon>
    </lineage>
</organism>
<dbReference type="EC" id="6.1.1.23" evidence="1"/>
<dbReference type="EMBL" id="AL009126">
    <property type="protein sequence ID" value="CAB14714.1"/>
    <property type="molecule type" value="Genomic_DNA"/>
</dbReference>
<dbReference type="PIR" id="D69591">
    <property type="entry name" value="D69591"/>
</dbReference>
<dbReference type="RefSeq" id="NP_390633.1">
    <property type="nucleotide sequence ID" value="NC_000964.3"/>
</dbReference>
<dbReference type="RefSeq" id="WP_003229758.1">
    <property type="nucleotide sequence ID" value="NZ_OZ025638.1"/>
</dbReference>
<dbReference type="SMR" id="O32038"/>
<dbReference type="FunCoup" id="O32038">
    <property type="interactions" value="695"/>
</dbReference>
<dbReference type="IntAct" id="O32038">
    <property type="interactions" value="1"/>
</dbReference>
<dbReference type="MINT" id="O32038"/>
<dbReference type="STRING" id="224308.BSU27550"/>
<dbReference type="jPOST" id="O32038"/>
<dbReference type="PaxDb" id="224308-BSU27550"/>
<dbReference type="EnsemblBacteria" id="CAB14714">
    <property type="protein sequence ID" value="CAB14714"/>
    <property type="gene ID" value="BSU_27550"/>
</dbReference>
<dbReference type="GeneID" id="937549"/>
<dbReference type="KEGG" id="bsu:BSU27550"/>
<dbReference type="PATRIC" id="fig|224308.179.peg.2994"/>
<dbReference type="eggNOG" id="COG0173">
    <property type="taxonomic scope" value="Bacteria"/>
</dbReference>
<dbReference type="InParanoid" id="O32038"/>
<dbReference type="OrthoDB" id="9802326at2"/>
<dbReference type="PhylomeDB" id="O32038"/>
<dbReference type="BioCyc" id="BSUB:BSU27550-MONOMER"/>
<dbReference type="BRENDA" id="6.1.1.23">
    <property type="organism ID" value="658"/>
</dbReference>
<dbReference type="Proteomes" id="UP000001570">
    <property type="component" value="Chromosome"/>
</dbReference>
<dbReference type="GO" id="GO:0005737">
    <property type="term" value="C:cytoplasm"/>
    <property type="evidence" value="ECO:0007669"/>
    <property type="project" value="UniProtKB-SubCell"/>
</dbReference>
<dbReference type="GO" id="GO:0004815">
    <property type="term" value="F:aspartate-tRNA ligase activity"/>
    <property type="evidence" value="ECO:0000318"/>
    <property type="project" value="GO_Central"/>
</dbReference>
<dbReference type="GO" id="GO:0050560">
    <property type="term" value="F:aspartate-tRNA(Asn) ligase activity"/>
    <property type="evidence" value="ECO:0007669"/>
    <property type="project" value="UniProtKB-EC"/>
</dbReference>
<dbReference type="GO" id="GO:0005524">
    <property type="term" value="F:ATP binding"/>
    <property type="evidence" value="ECO:0007669"/>
    <property type="project" value="UniProtKB-UniRule"/>
</dbReference>
<dbReference type="GO" id="GO:0140096">
    <property type="term" value="F:catalytic activity, acting on a protein"/>
    <property type="evidence" value="ECO:0007669"/>
    <property type="project" value="UniProtKB-ARBA"/>
</dbReference>
<dbReference type="GO" id="GO:0003676">
    <property type="term" value="F:nucleic acid binding"/>
    <property type="evidence" value="ECO:0007669"/>
    <property type="project" value="InterPro"/>
</dbReference>
<dbReference type="GO" id="GO:0016740">
    <property type="term" value="F:transferase activity"/>
    <property type="evidence" value="ECO:0007669"/>
    <property type="project" value="UniProtKB-ARBA"/>
</dbReference>
<dbReference type="GO" id="GO:0006422">
    <property type="term" value="P:aspartyl-tRNA aminoacylation"/>
    <property type="evidence" value="ECO:0000318"/>
    <property type="project" value="GO_Central"/>
</dbReference>
<dbReference type="CDD" id="cd00777">
    <property type="entry name" value="AspRS_core"/>
    <property type="match status" value="1"/>
</dbReference>
<dbReference type="CDD" id="cd04317">
    <property type="entry name" value="EcAspRS_like_N"/>
    <property type="match status" value="1"/>
</dbReference>
<dbReference type="Gene3D" id="3.30.930.10">
    <property type="entry name" value="Bira Bifunctional Protein, Domain 2"/>
    <property type="match status" value="1"/>
</dbReference>
<dbReference type="Gene3D" id="3.30.1360.30">
    <property type="entry name" value="GAD-like domain"/>
    <property type="match status" value="1"/>
</dbReference>
<dbReference type="Gene3D" id="2.40.50.140">
    <property type="entry name" value="Nucleic acid-binding proteins"/>
    <property type="match status" value="1"/>
</dbReference>
<dbReference type="HAMAP" id="MF_00044">
    <property type="entry name" value="Asp_tRNA_synth_type1"/>
    <property type="match status" value="1"/>
</dbReference>
<dbReference type="InterPro" id="IPR004364">
    <property type="entry name" value="Aa-tRNA-synt_II"/>
</dbReference>
<dbReference type="InterPro" id="IPR006195">
    <property type="entry name" value="aa-tRNA-synth_II"/>
</dbReference>
<dbReference type="InterPro" id="IPR045864">
    <property type="entry name" value="aa-tRNA-synth_II/BPL/LPL"/>
</dbReference>
<dbReference type="InterPro" id="IPR004524">
    <property type="entry name" value="Asp-tRNA-ligase_1"/>
</dbReference>
<dbReference type="InterPro" id="IPR047089">
    <property type="entry name" value="Asp-tRNA-ligase_1_N"/>
</dbReference>
<dbReference type="InterPro" id="IPR002312">
    <property type="entry name" value="Asp/Asn-tRNA-synth_IIb"/>
</dbReference>
<dbReference type="InterPro" id="IPR047090">
    <property type="entry name" value="AspRS_core"/>
</dbReference>
<dbReference type="InterPro" id="IPR004115">
    <property type="entry name" value="GAD-like_sf"/>
</dbReference>
<dbReference type="InterPro" id="IPR029351">
    <property type="entry name" value="GAD_dom"/>
</dbReference>
<dbReference type="InterPro" id="IPR012340">
    <property type="entry name" value="NA-bd_OB-fold"/>
</dbReference>
<dbReference type="InterPro" id="IPR004365">
    <property type="entry name" value="NA-bd_OB_tRNA"/>
</dbReference>
<dbReference type="NCBIfam" id="TIGR00459">
    <property type="entry name" value="aspS_bact"/>
    <property type="match status" value="1"/>
</dbReference>
<dbReference type="NCBIfam" id="NF001750">
    <property type="entry name" value="PRK00476.1"/>
    <property type="match status" value="1"/>
</dbReference>
<dbReference type="PANTHER" id="PTHR22594:SF5">
    <property type="entry name" value="ASPARTATE--TRNA LIGASE, MITOCHONDRIAL"/>
    <property type="match status" value="1"/>
</dbReference>
<dbReference type="PANTHER" id="PTHR22594">
    <property type="entry name" value="ASPARTYL/LYSYL-TRNA SYNTHETASE"/>
    <property type="match status" value="1"/>
</dbReference>
<dbReference type="Pfam" id="PF02938">
    <property type="entry name" value="GAD"/>
    <property type="match status" value="1"/>
</dbReference>
<dbReference type="Pfam" id="PF00152">
    <property type="entry name" value="tRNA-synt_2"/>
    <property type="match status" value="1"/>
</dbReference>
<dbReference type="Pfam" id="PF01336">
    <property type="entry name" value="tRNA_anti-codon"/>
    <property type="match status" value="1"/>
</dbReference>
<dbReference type="PRINTS" id="PR01042">
    <property type="entry name" value="TRNASYNTHASP"/>
</dbReference>
<dbReference type="SUPFAM" id="SSF55681">
    <property type="entry name" value="Class II aaRS and biotin synthetases"/>
    <property type="match status" value="1"/>
</dbReference>
<dbReference type="SUPFAM" id="SSF55261">
    <property type="entry name" value="GAD domain-like"/>
    <property type="match status" value="1"/>
</dbReference>
<dbReference type="SUPFAM" id="SSF50249">
    <property type="entry name" value="Nucleic acid-binding proteins"/>
    <property type="match status" value="1"/>
</dbReference>
<dbReference type="PROSITE" id="PS50862">
    <property type="entry name" value="AA_TRNA_LIGASE_II"/>
    <property type="match status" value="1"/>
</dbReference>
<feature type="chain" id="PRO_0000110829" description="Aspartate--tRNA(Asp/Asn) ligase">
    <location>
        <begin position="1"/>
        <end position="592"/>
    </location>
</feature>
<feature type="region of interest" description="Aspartate" evidence="1">
    <location>
        <begin position="201"/>
        <end position="204"/>
    </location>
</feature>
<feature type="binding site" evidence="1">
    <location>
        <position position="177"/>
    </location>
    <ligand>
        <name>L-aspartate</name>
        <dbReference type="ChEBI" id="CHEBI:29991"/>
    </ligand>
</feature>
<feature type="binding site" evidence="1">
    <location>
        <begin position="223"/>
        <end position="225"/>
    </location>
    <ligand>
        <name>ATP</name>
        <dbReference type="ChEBI" id="CHEBI:30616"/>
    </ligand>
</feature>
<feature type="binding site" evidence="1">
    <location>
        <position position="223"/>
    </location>
    <ligand>
        <name>L-aspartate</name>
        <dbReference type="ChEBI" id="CHEBI:29991"/>
    </ligand>
</feature>
<feature type="binding site" evidence="1">
    <location>
        <position position="232"/>
    </location>
    <ligand>
        <name>ATP</name>
        <dbReference type="ChEBI" id="CHEBI:30616"/>
    </ligand>
</feature>
<feature type="binding site" evidence="1">
    <location>
        <position position="451"/>
    </location>
    <ligand>
        <name>L-aspartate</name>
        <dbReference type="ChEBI" id="CHEBI:29991"/>
    </ligand>
</feature>
<feature type="binding site" evidence="1">
    <location>
        <position position="485"/>
    </location>
    <ligand>
        <name>ATP</name>
        <dbReference type="ChEBI" id="CHEBI:30616"/>
    </ligand>
</feature>
<feature type="binding site" evidence="1">
    <location>
        <position position="492"/>
    </location>
    <ligand>
        <name>L-aspartate</name>
        <dbReference type="ChEBI" id="CHEBI:29991"/>
    </ligand>
</feature>
<feature type="binding site" evidence="1">
    <location>
        <begin position="537"/>
        <end position="540"/>
    </location>
    <ligand>
        <name>ATP</name>
        <dbReference type="ChEBI" id="CHEBI:30616"/>
    </ligand>
</feature>
<feature type="site" description="Important for tRNA non-discrimination" evidence="1">
    <location>
        <position position="84"/>
    </location>
</feature>
<protein>
    <recommendedName>
        <fullName evidence="1">Aspartate--tRNA(Asp/Asn) ligase</fullName>
        <ecNumber evidence="1">6.1.1.23</ecNumber>
    </recommendedName>
    <alternativeName>
        <fullName evidence="1">Aspartyl-tRNA synthetase</fullName>
        <shortName evidence="1">AspRS</shortName>
    </alternativeName>
    <alternativeName>
        <fullName evidence="1">Non-discriminating aspartyl-tRNA synthetase</fullName>
        <shortName evidence="1">ND-AspRS</shortName>
    </alternativeName>
</protein>
<comment type="function">
    <text evidence="1">Aspartyl-tRNA synthetase with relaxed tRNA specificity since it is able to aspartylate not only its cognate tRNA(Asp) but also tRNA(Asn). Reaction proceeds in two steps: L-aspartate is first activated by ATP to form Asp-AMP and then transferred to the acceptor end of tRNA(Asp/Asn).</text>
</comment>
<comment type="catalytic activity">
    <reaction evidence="1">
        <text>tRNA(Asx) + L-aspartate + ATP = L-aspartyl-tRNA(Asx) + AMP + diphosphate</text>
        <dbReference type="Rhea" id="RHEA:18349"/>
        <dbReference type="Rhea" id="RHEA-COMP:9710"/>
        <dbReference type="Rhea" id="RHEA-COMP:9711"/>
        <dbReference type="ChEBI" id="CHEBI:29991"/>
        <dbReference type="ChEBI" id="CHEBI:30616"/>
        <dbReference type="ChEBI" id="CHEBI:33019"/>
        <dbReference type="ChEBI" id="CHEBI:78442"/>
        <dbReference type="ChEBI" id="CHEBI:78516"/>
        <dbReference type="ChEBI" id="CHEBI:456215"/>
        <dbReference type="EC" id="6.1.1.23"/>
    </reaction>
</comment>
<comment type="subunit">
    <text evidence="1">Homodimer.</text>
</comment>
<comment type="subcellular location">
    <subcellularLocation>
        <location evidence="1">Cytoplasm</location>
    </subcellularLocation>
</comment>
<comment type="similarity">
    <text evidence="1">Belongs to the class-II aminoacyl-tRNA synthetase family. Type 1 subfamily.</text>
</comment>
<gene>
    <name evidence="1" type="primary">aspS</name>
    <name type="ordered locus">BSU27550</name>
</gene>
<keyword id="KW-0030">Aminoacyl-tRNA synthetase</keyword>
<keyword id="KW-0067">ATP-binding</keyword>
<keyword id="KW-0963">Cytoplasm</keyword>
<keyword id="KW-0436">Ligase</keyword>
<keyword id="KW-0547">Nucleotide-binding</keyword>
<keyword id="KW-0648">Protein biosynthesis</keyword>
<keyword id="KW-1185">Reference proteome</keyword>